<reference key="1">
    <citation type="journal article" date="2002" name="Immunogenetics">
        <title>Beta-defensin 1 gene variability among non-human primates.</title>
        <authorList>
            <person name="Del Pero M."/>
            <person name="Boniotto M."/>
            <person name="Zuccon D."/>
            <person name="Cervella P."/>
            <person name="Spano A."/>
            <person name="Amoroso A."/>
            <person name="Crovella S."/>
        </authorList>
    </citation>
    <scope>NUCLEOTIDE SEQUENCE [GENOMIC DNA]</scope>
</reference>
<organism>
    <name type="scientific">Saguinus oedipus</name>
    <name type="common">Cotton-top tamarin</name>
    <dbReference type="NCBI Taxonomy" id="9490"/>
    <lineage>
        <taxon>Eukaryota</taxon>
        <taxon>Metazoa</taxon>
        <taxon>Chordata</taxon>
        <taxon>Craniata</taxon>
        <taxon>Vertebrata</taxon>
        <taxon>Euteleostomi</taxon>
        <taxon>Mammalia</taxon>
        <taxon>Eutheria</taxon>
        <taxon>Euarchontoglires</taxon>
        <taxon>Primates</taxon>
        <taxon>Haplorrhini</taxon>
        <taxon>Platyrrhini</taxon>
        <taxon>Cebidae</taxon>
        <taxon>Callitrichinae</taxon>
        <taxon>Saguinus</taxon>
    </lineage>
</organism>
<name>DEFB1_SAGOE</name>
<sequence>MRTSYLLLFILCLVLCDMDSGDTFLTGLGHRSDHYNCVKGGGQCLYSACPIYTKVQGTCYGGKAKCCK</sequence>
<protein>
    <recommendedName>
        <fullName>Beta-defensin 1</fullName>
        <shortName>BD-1</shortName>
    </recommendedName>
    <alternativeName>
        <fullName>Defensin, beta 1</fullName>
    </alternativeName>
</protein>
<evidence type="ECO:0000250" key="1"/>
<evidence type="ECO:0000250" key="2">
    <source>
        <dbReference type="UniProtKB" id="P60022"/>
    </source>
</evidence>
<evidence type="ECO:0000255" key="3"/>
<evidence type="ECO:0000305" key="4"/>
<dbReference type="EMBL" id="AY033763">
    <property type="protein sequence ID" value="AAK61475.1"/>
    <property type="molecule type" value="Genomic_DNA"/>
</dbReference>
<dbReference type="EMBL" id="AY033748">
    <property type="protein sequence ID" value="AAK61475.1"/>
    <property type="status" value="JOINED"/>
    <property type="molecule type" value="Genomic_DNA"/>
</dbReference>
<dbReference type="SMR" id="Q95M66"/>
<dbReference type="GO" id="GO:0005615">
    <property type="term" value="C:extracellular space"/>
    <property type="evidence" value="ECO:0007669"/>
    <property type="project" value="TreeGrafter"/>
</dbReference>
<dbReference type="GO" id="GO:0016020">
    <property type="term" value="C:membrane"/>
    <property type="evidence" value="ECO:0000250"/>
    <property type="project" value="UniProtKB"/>
</dbReference>
<dbReference type="GO" id="GO:1990742">
    <property type="term" value="C:microvesicle"/>
    <property type="evidence" value="ECO:0000250"/>
    <property type="project" value="UniProtKB"/>
</dbReference>
<dbReference type="GO" id="GO:0097225">
    <property type="term" value="C:sperm midpiece"/>
    <property type="evidence" value="ECO:0000250"/>
    <property type="project" value="UniProtKB"/>
</dbReference>
<dbReference type="GO" id="GO:0031731">
    <property type="term" value="F:CCR6 chemokine receptor binding"/>
    <property type="evidence" value="ECO:0000250"/>
    <property type="project" value="UniProtKB"/>
</dbReference>
<dbReference type="GO" id="GO:0042802">
    <property type="term" value="F:identical protein binding"/>
    <property type="evidence" value="ECO:0000250"/>
    <property type="project" value="UniProtKB"/>
</dbReference>
<dbReference type="GO" id="GO:0019722">
    <property type="term" value="P:calcium-mediated signaling"/>
    <property type="evidence" value="ECO:0000250"/>
    <property type="project" value="UniProtKB"/>
</dbReference>
<dbReference type="GO" id="GO:0050829">
    <property type="term" value="P:defense response to Gram-negative bacterium"/>
    <property type="evidence" value="ECO:0000250"/>
    <property type="project" value="UniProtKB"/>
</dbReference>
<dbReference type="GO" id="GO:0050830">
    <property type="term" value="P:defense response to Gram-positive bacterium"/>
    <property type="evidence" value="ECO:0000250"/>
    <property type="project" value="UniProtKB"/>
</dbReference>
<dbReference type="GO" id="GO:0002227">
    <property type="term" value="P:innate immune response in mucosa"/>
    <property type="evidence" value="ECO:0007669"/>
    <property type="project" value="TreeGrafter"/>
</dbReference>
<dbReference type="GO" id="GO:0060474">
    <property type="term" value="P:positive regulation of flagellated sperm motility involved in capacitation"/>
    <property type="evidence" value="ECO:0000250"/>
    <property type="project" value="UniProtKB"/>
</dbReference>
<dbReference type="FunFam" id="3.10.360.10:FF:000001">
    <property type="entry name" value="Beta-defensin 1"/>
    <property type="match status" value="1"/>
</dbReference>
<dbReference type="Gene3D" id="3.10.360.10">
    <property type="entry name" value="Antimicrobial Peptide, Beta-defensin 2, Chain A"/>
    <property type="match status" value="1"/>
</dbReference>
<dbReference type="InterPro" id="IPR001855">
    <property type="entry name" value="Defensin_beta-like"/>
</dbReference>
<dbReference type="PANTHER" id="PTHR21388:SF9">
    <property type="entry name" value="BETA-DEFENSIN 1"/>
    <property type="match status" value="1"/>
</dbReference>
<dbReference type="PANTHER" id="PTHR21388">
    <property type="entry name" value="BETA-DEFENSIN-RELATED"/>
    <property type="match status" value="1"/>
</dbReference>
<dbReference type="Pfam" id="PF00711">
    <property type="entry name" value="Defensin_beta"/>
    <property type="match status" value="1"/>
</dbReference>
<dbReference type="SUPFAM" id="SSF57392">
    <property type="entry name" value="Defensin-like"/>
    <property type="match status" value="1"/>
</dbReference>
<accession>Q95M66</accession>
<keyword id="KW-0044">Antibiotic</keyword>
<keyword id="KW-0929">Antimicrobial</keyword>
<keyword id="KW-0211">Defensin</keyword>
<keyword id="KW-1015">Disulfide bond</keyword>
<keyword id="KW-0472">Membrane</keyword>
<keyword id="KW-0964">Secreted</keyword>
<keyword id="KW-0732">Signal</keyword>
<proteinExistence type="inferred from homology"/>
<feature type="signal peptide" evidence="3">
    <location>
        <begin position="1"/>
        <end position="21"/>
    </location>
</feature>
<feature type="propeptide" id="PRO_0000006923" evidence="1">
    <location>
        <begin position="22"/>
        <end position="32"/>
    </location>
</feature>
<feature type="peptide" id="PRO_0000006924" description="Beta-defensin 1">
    <location>
        <begin position="33"/>
        <end position="68"/>
    </location>
</feature>
<feature type="disulfide bond" evidence="1">
    <location>
        <begin position="37"/>
        <end position="66"/>
    </location>
</feature>
<feature type="disulfide bond" evidence="1">
    <location>
        <begin position="44"/>
        <end position="59"/>
    </location>
</feature>
<feature type="disulfide bond" evidence="1">
    <location>
        <begin position="49"/>
        <end position="67"/>
    </location>
</feature>
<comment type="function">
    <text evidence="2">Has bactericidal activity. May act as a ligand for C-C chemokine receptor CCR6. Positively regulates the sperm motility and bactericidal activity in a CCR6-dependent manner. Binds to CCR6 and triggers Ca2+ mobilization in the sperm which is important for its motility.</text>
</comment>
<comment type="subunit">
    <text evidence="2">Monomer. Homodimer.</text>
</comment>
<comment type="subcellular location">
    <subcellularLocation>
        <location evidence="2">Secreted</location>
    </subcellularLocation>
    <subcellularLocation>
        <location evidence="2">Membrane</location>
    </subcellularLocation>
    <text evidence="2">Associates with tumor cell membrane-derived microvesicles.</text>
</comment>
<comment type="similarity">
    <text evidence="4">Belongs to the beta-defensin family.</text>
</comment>
<gene>
    <name type="primary">DEFB1</name>
</gene>